<protein>
    <recommendedName>
        <fullName>Protein B1</fullName>
    </recommendedName>
</protein>
<gene>
    <name type="primary">B1</name>
</gene>
<accession>P68828</accession>
<accession>P29099</accession>
<evidence type="ECO:0000256" key="1">
    <source>
        <dbReference type="SAM" id="MobiDB-lite"/>
    </source>
</evidence>
<organism>
    <name type="scientific">Black beetle virus</name>
    <name type="common">BBV</name>
    <dbReference type="NCBI Taxonomy" id="12285"/>
    <lineage>
        <taxon>Viruses</taxon>
        <taxon>Riboviria</taxon>
        <taxon>Orthornavirae</taxon>
        <taxon>Kitrinoviricota</taxon>
        <taxon>Magsaviricetes</taxon>
        <taxon>Nodamuvirales</taxon>
        <taxon>Nodaviridae</taxon>
        <taxon>Alphanodavirus</taxon>
    </lineage>
</organism>
<sequence>MLNDAKQTRANPGTSRPHSNGGGSSHGNELPRRTEQRAQGPRQPARLPKQGKTNGKSDGNITAGETQRGGIPRGKGPRGGKTNTRRTPPKAGAQPQPSNNRK</sequence>
<organismHost>
    <name type="scientific">Heteronychus arator</name>
    <name type="common">African black beetle</name>
    <dbReference type="NCBI Taxonomy" id="295550"/>
</organismHost>
<feature type="chain" id="PRO_0000222451" description="Protein B1">
    <location>
        <begin position="1"/>
        <end position="102"/>
    </location>
</feature>
<feature type="region of interest" description="Disordered" evidence="1">
    <location>
        <begin position="1"/>
        <end position="102"/>
    </location>
</feature>
<feature type="compositionally biased region" description="Polar residues" evidence="1">
    <location>
        <begin position="8"/>
        <end position="17"/>
    </location>
</feature>
<feature type="compositionally biased region" description="Polar residues" evidence="1">
    <location>
        <begin position="51"/>
        <end position="65"/>
    </location>
</feature>
<feature type="compositionally biased region" description="Basic residues" evidence="1">
    <location>
        <begin position="75"/>
        <end position="88"/>
    </location>
</feature>
<reference key="1">
    <citation type="journal article" date="1984" name="Virology">
        <title>Sequence of the black beetle virus subgenomic RNA and its location in the viral genome.</title>
        <authorList>
            <person name="Guarino L.A."/>
            <person name="Ghosh A."/>
            <person name="Dasmahapatra B."/>
            <person name="Dasgupta R."/>
            <person name="Kaesberg P."/>
        </authorList>
    </citation>
    <scope>NUCLEOTIDE SEQUENCE [GENOMIC RNA]</scope>
</reference>
<reference key="2">
    <citation type="journal article" date="1985" name="J. Mol. Biol.">
        <title>Structure of the black beetle virus genome and its functional implications.</title>
        <authorList>
            <person name="Dasmahapatra B."/>
            <person name="Dasgupta R."/>
            <person name="Ghosh A."/>
            <person name="Kaesberg P."/>
        </authorList>
    </citation>
    <scope>NUCLEOTIDE SEQUENCE [GENOMIC RNA]</scope>
</reference>
<comment type="function">
    <text>Not known. Encoded on a subgenomic RNA (RNA3) synthesized during replication and which is co-terminal with RNA1.</text>
</comment>
<proteinExistence type="predicted"/>
<name>B1_BBV</name>
<dbReference type="EMBL" id="M33065">
    <property type="protein sequence ID" value="AAA42745.1"/>
    <property type="molecule type" value="Genomic_RNA"/>
</dbReference>
<dbReference type="EMBL" id="X02396">
    <property type="protein sequence ID" value="CAA26239.1"/>
    <property type="molecule type" value="Genomic_RNA"/>
</dbReference>
<dbReference type="RefSeq" id="YP_057021.1">
    <property type="nucleotide sequence ID" value="NC_001411.2"/>
</dbReference>
<dbReference type="KEGG" id="vg:956650"/>
<dbReference type="OrthoDB" id="155at10239"/>
<dbReference type="Proteomes" id="UP000203003">
    <property type="component" value="Genome"/>
</dbReference>